<proteinExistence type="inferred from homology"/>
<gene>
    <name type="primary">ndhF</name>
</gene>
<geneLocation type="chloroplast"/>
<feature type="chain" id="PRO_0000118179" description="NAD(P)H-quinone oxidoreductase subunit 5, chloroplastic">
    <location>
        <begin position="1"/>
        <end position="743"/>
    </location>
</feature>
<feature type="transmembrane region" description="Helical" evidence="2">
    <location>
        <begin position="9"/>
        <end position="29"/>
    </location>
</feature>
<feature type="transmembrane region" description="Helical" evidence="2">
    <location>
        <begin position="40"/>
        <end position="60"/>
    </location>
</feature>
<feature type="transmembrane region" description="Helical" evidence="2">
    <location>
        <begin position="89"/>
        <end position="109"/>
    </location>
</feature>
<feature type="transmembrane region" description="Helical" evidence="2">
    <location>
        <begin position="125"/>
        <end position="145"/>
    </location>
</feature>
<feature type="transmembrane region" description="Helical" evidence="2">
    <location>
        <begin position="147"/>
        <end position="167"/>
    </location>
</feature>
<feature type="transmembrane region" description="Helical" evidence="2">
    <location>
        <begin position="185"/>
        <end position="205"/>
    </location>
</feature>
<feature type="transmembrane region" description="Helical" evidence="2">
    <location>
        <begin position="219"/>
        <end position="239"/>
    </location>
</feature>
<feature type="transmembrane region" description="Helical" evidence="2">
    <location>
        <begin position="258"/>
        <end position="278"/>
    </location>
</feature>
<feature type="transmembrane region" description="Helical" evidence="2">
    <location>
        <begin position="283"/>
        <end position="303"/>
    </location>
</feature>
<feature type="transmembrane region" description="Helical" evidence="2">
    <location>
        <begin position="327"/>
        <end position="347"/>
    </location>
</feature>
<feature type="transmembrane region" description="Helical" evidence="2">
    <location>
        <begin position="354"/>
        <end position="374"/>
    </location>
</feature>
<feature type="transmembrane region" description="Helical" evidence="2">
    <location>
        <begin position="396"/>
        <end position="416"/>
    </location>
</feature>
<feature type="transmembrane region" description="Helical" evidence="2">
    <location>
        <begin position="425"/>
        <end position="445"/>
    </location>
</feature>
<feature type="transmembrane region" description="Helical" evidence="2">
    <location>
        <begin position="548"/>
        <end position="568"/>
    </location>
</feature>
<feature type="transmembrane region" description="Helical" evidence="2">
    <location>
        <begin position="607"/>
        <end position="627"/>
    </location>
</feature>
<feature type="transmembrane region" description="Helical" evidence="2">
    <location>
        <begin position="723"/>
        <end position="743"/>
    </location>
</feature>
<comment type="function">
    <text evidence="1">NDH shuttles electrons from NAD(P)H:plastoquinone, via FMN and iron-sulfur (Fe-S) centers, to quinones in the photosynthetic chain and possibly in a chloroplast respiratory chain. The immediate electron acceptor for the enzyme in this species is believed to be plastoquinone. Couples the redox reaction to proton translocation, and thus conserves the redox energy in a proton gradient (By similarity).</text>
</comment>
<comment type="catalytic activity">
    <reaction>
        <text>a plastoquinone + NADH + (n+1) H(+)(in) = a plastoquinol + NAD(+) + n H(+)(out)</text>
        <dbReference type="Rhea" id="RHEA:42608"/>
        <dbReference type="Rhea" id="RHEA-COMP:9561"/>
        <dbReference type="Rhea" id="RHEA-COMP:9562"/>
        <dbReference type="ChEBI" id="CHEBI:15378"/>
        <dbReference type="ChEBI" id="CHEBI:17757"/>
        <dbReference type="ChEBI" id="CHEBI:57540"/>
        <dbReference type="ChEBI" id="CHEBI:57945"/>
        <dbReference type="ChEBI" id="CHEBI:62192"/>
    </reaction>
</comment>
<comment type="catalytic activity">
    <reaction>
        <text>a plastoquinone + NADPH + (n+1) H(+)(in) = a plastoquinol + NADP(+) + n H(+)(out)</text>
        <dbReference type="Rhea" id="RHEA:42612"/>
        <dbReference type="Rhea" id="RHEA-COMP:9561"/>
        <dbReference type="Rhea" id="RHEA-COMP:9562"/>
        <dbReference type="ChEBI" id="CHEBI:15378"/>
        <dbReference type="ChEBI" id="CHEBI:17757"/>
        <dbReference type="ChEBI" id="CHEBI:57783"/>
        <dbReference type="ChEBI" id="CHEBI:58349"/>
        <dbReference type="ChEBI" id="CHEBI:62192"/>
    </reaction>
</comment>
<comment type="subunit">
    <text evidence="1">NDH is composed of at least 16 different subunits, 5 of which are encoded in the nucleus.</text>
</comment>
<comment type="subcellular location">
    <subcellularLocation>
        <location evidence="1">Plastid</location>
        <location evidence="1">Chloroplast thylakoid membrane</location>
        <topology evidence="1">Multi-pass membrane protein</topology>
    </subcellularLocation>
</comment>
<comment type="similarity">
    <text evidence="3">Belongs to the complex I subunit 5 family.</text>
</comment>
<keyword id="KW-0150">Chloroplast</keyword>
<keyword id="KW-0472">Membrane</keyword>
<keyword id="KW-0520">NAD</keyword>
<keyword id="KW-0521">NADP</keyword>
<keyword id="KW-0934">Plastid</keyword>
<keyword id="KW-0618">Plastoquinone</keyword>
<keyword id="KW-0874">Quinone</keyword>
<keyword id="KW-0793">Thylakoid</keyword>
<keyword id="KW-1278">Translocase</keyword>
<keyword id="KW-0812">Transmembrane</keyword>
<keyword id="KW-1133">Transmembrane helix</keyword>
<keyword id="KW-0813">Transport</keyword>
<evidence type="ECO:0000250" key="1"/>
<evidence type="ECO:0000255" key="2"/>
<evidence type="ECO:0000305" key="3"/>
<protein>
    <recommendedName>
        <fullName>NAD(P)H-quinone oxidoreductase subunit 5, chloroplastic</fullName>
        <ecNumber>7.1.1.-</ecNumber>
    </recommendedName>
    <alternativeName>
        <fullName>NAD(P)H dehydrogenase subunit 5</fullName>
    </alternativeName>
    <alternativeName>
        <fullName>NADH-plastoquinone oxidoreductase subunit 5</fullName>
    </alternativeName>
</protein>
<organism>
    <name type="scientific">Carthamus tinctorius</name>
    <name type="common">Safflower</name>
    <dbReference type="NCBI Taxonomy" id="4222"/>
    <lineage>
        <taxon>Eukaryota</taxon>
        <taxon>Viridiplantae</taxon>
        <taxon>Streptophyta</taxon>
        <taxon>Embryophyta</taxon>
        <taxon>Tracheophyta</taxon>
        <taxon>Spermatophyta</taxon>
        <taxon>Magnoliopsida</taxon>
        <taxon>eudicotyledons</taxon>
        <taxon>Gunneridae</taxon>
        <taxon>Pentapetalae</taxon>
        <taxon>asterids</taxon>
        <taxon>campanulids</taxon>
        <taxon>Asterales</taxon>
        <taxon>Asteraceae</taxon>
        <taxon>Carduoideae</taxon>
        <taxon>Cardueae</taxon>
        <taxon>Centaureinae</taxon>
        <taxon>Carthamus</taxon>
    </lineage>
</organism>
<accession>Q32091</accession>
<name>NU5C_CARTI</name>
<sequence>MEQTYQYAWIIPFLPLPVPMLIGVGLLLFPTATKSLRRMWAFQSVLLLSIVMIFSMNLSIHQINSSSVYQYVWSWIINNDFSLEFGYLIDPLTSIMSILITTVGILVLIYSDNYMSHDHGYLRFFAYMSFFSTSMLGLVTSSNLIQIYIFWELVGICSYLLIGFWFTRPVAAKACQKAFVTNRVGDFGLLLGILGFYWITGSFEFRDLFQIFNNLISNNEVNFLFVTLCAVLLFAGAIAKSAQFPLHVWLPDAMEGPTPISALIHAATMVAAGIFLVARLMPLFIVIPHIMNFISLIGIITVFLGATLALAQKDIKRGLAYSTMSQLGYMMLALGMGSYRSALFHLITHAYSKALLFLGSGSVIHSMETLVGYCPKKSQNMVLMGGLTKHVPITKISFLLGTLSLCGIPPLACFWSKDEILNDSWLYSPIFAIIAWSTAGLTAFYMCRIYLLTFEGHLNVHFQNYSGKKNTPFYSISLWGKEGSKISNKNFRLVTLLKMKNGRLSFFSNKVYKIDENVRNMIQPFLSIPHFGNTKTYSYPYESDNTMLFPILILIIFTLFIGFLGIPFNQDGVNLDILSKWLTPSINLLHKNSNNSIDWYEFCKDAVFSVSIASFGIFIAFFLYKPVYSSFQNLDLINSFVKTGPKRIFYDKIKNAIYDWSYNRGYIDAFYETFLTGGMRKLAKFAHFFDRRIIDGIPNGAGLMSFFVAEVIKSVGGGRISSYLFFYFSYVSICLLSYYFFNL</sequence>
<reference key="1">
    <citation type="journal article" date="1995" name="Proc. Natl. Acad. Sci. U.S.A.">
        <title>ndhF sequence evolution and the major clades in the sunflower family.</title>
        <authorList>
            <person name="Kim K.-J."/>
            <person name="Jansen R.K."/>
        </authorList>
    </citation>
    <scope>NUCLEOTIDE SEQUENCE [GENOMIC DNA]</scope>
</reference>
<dbReference type="EC" id="7.1.1.-"/>
<dbReference type="EMBL" id="L39417">
    <property type="protein sequence ID" value="AAC37445.1"/>
    <property type="molecule type" value="Genomic_DNA"/>
</dbReference>
<dbReference type="PIR" id="T12760">
    <property type="entry name" value="T12760"/>
</dbReference>
<dbReference type="SMR" id="Q32091"/>
<dbReference type="GO" id="GO:0009535">
    <property type="term" value="C:chloroplast thylakoid membrane"/>
    <property type="evidence" value="ECO:0007669"/>
    <property type="project" value="UniProtKB-SubCell"/>
</dbReference>
<dbReference type="GO" id="GO:0008137">
    <property type="term" value="F:NADH dehydrogenase (ubiquinone) activity"/>
    <property type="evidence" value="ECO:0007669"/>
    <property type="project" value="InterPro"/>
</dbReference>
<dbReference type="GO" id="GO:0048038">
    <property type="term" value="F:quinone binding"/>
    <property type="evidence" value="ECO:0007669"/>
    <property type="project" value="UniProtKB-KW"/>
</dbReference>
<dbReference type="GO" id="GO:0042773">
    <property type="term" value="P:ATP synthesis coupled electron transport"/>
    <property type="evidence" value="ECO:0007669"/>
    <property type="project" value="InterPro"/>
</dbReference>
<dbReference type="GO" id="GO:0015990">
    <property type="term" value="P:electron transport coupled proton transport"/>
    <property type="evidence" value="ECO:0007669"/>
    <property type="project" value="TreeGrafter"/>
</dbReference>
<dbReference type="Gene3D" id="1.20.5.2700">
    <property type="match status" value="1"/>
</dbReference>
<dbReference type="InterPro" id="IPR002128">
    <property type="entry name" value="NADH_UbQ_OxRdtase_chlpt_su5_C"/>
</dbReference>
<dbReference type="InterPro" id="IPR018393">
    <property type="entry name" value="NADHpl_OxRdtase_5_subgr"/>
</dbReference>
<dbReference type="InterPro" id="IPR001750">
    <property type="entry name" value="ND/Mrp_TM"/>
</dbReference>
<dbReference type="InterPro" id="IPR003945">
    <property type="entry name" value="NU5C-like"/>
</dbReference>
<dbReference type="InterPro" id="IPR001516">
    <property type="entry name" value="Proton_antipo_N"/>
</dbReference>
<dbReference type="NCBIfam" id="TIGR01974">
    <property type="entry name" value="NDH_I_L"/>
    <property type="match status" value="1"/>
</dbReference>
<dbReference type="NCBIfam" id="NF005141">
    <property type="entry name" value="PRK06590.1"/>
    <property type="match status" value="1"/>
</dbReference>
<dbReference type="PANTHER" id="PTHR42829">
    <property type="entry name" value="NADH-UBIQUINONE OXIDOREDUCTASE CHAIN 5"/>
    <property type="match status" value="1"/>
</dbReference>
<dbReference type="PANTHER" id="PTHR42829:SF2">
    <property type="entry name" value="NADH-UBIQUINONE OXIDOREDUCTASE CHAIN 5"/>
    <property type="match status" value="1"/>
</dbReference>
<dbReference type="Pfam" id="PF01010">
    <property type="entry name" value="Proton_antipo_C"/>
    <property type="match status" value="1"/>
</dbReference>
<dbReference type="Pfam" id="PF00361">
    <property type="entry name" value="Proton_antipo_M"/>
    <property type="match status" value="1"/>
</dbReference>
<dbReference type="Pfam" id="PF00662">
    <property type="entry name" value="Proton_antipo_N"/>
    <property type="match status" value="1"/>
</dbReference>
<dbReference type="PRINTS" id="PR01434">
    <property type="entry name" value="NADHDHGNASE5"/>
</dbReference>
<dbReference type="PRINTS" id="PR01435">
    <property type="entry name" value="NPOXDRDTASE5"/>
</dbReference>